<organism>
    <name type="scientific">Jannaschia sp. (strain CCS1)</name>
    <dbReference type="NCBI Taxonomy" id="290400"/>
    <lineage>
        <taxon>Bacteria</taxon>
        <taxon>Pseudomonadati</taxon>
        <taxon>Pseudomonadota</taxon>
        <taxon>Alphaproteobacteria</taxon>
        <taxon>Rhodobacterales</taxon>
        <taxon>Roseobacteraceae</taxon>
        <taxon>Jannaschia</taxon>
    </lineage>
</organism>
<proteinExistence type="inferred from homology"/>
<protein>
    <recommendedName>
        <fullName evidence="1">Nicotinate-nucleotide--dimethylbenzimidazole phosphoribosyltransferase</fullName>
        <shortName evidence="1">NN:DBI PRT</shortName>
        <ecNumber evidence="1">2.4.2.21</ecNumber>
    </recommendedName>
    <alternativeName>
        <fullName evidence="1">N(1)-alpha-phosphoribosyltransferase</fullName>
    </alternativeName>
</protein>
<comment type="function">
    <text evidence="1">Catalyzes the synthesis of alpha-ribazole-5'-phosphate from nicotinate mononucleotide (NAMN) and 5,6-dimethylbenzimidazole (DMB).</text>
</comment>
<comment type="catalytic activity">
    <reaction evidence="1">
        <text>5,6-dimethylbenzimidazole + nicotinate beta-D-ribonucleotide = alpha-ribazole 5'-phosphate + nicotinate + H(+)</text>
        <dbReference type="Rhea" id="RHEA:11196"/>
        <dbReference type="ChEBI" id="CHEBI:15378"/>
        <dbReference type="ChEBI" id="CHEBI:15890"/>
        <dbReference type="ChEBI" id="CHEBI:32544"/>
        <dbReference type="ChEBI" id="CHEBI:57502"/>
        <dbReference type="ChEBI" id="CHEBI:57918"/>
        <dbReference type="EC" id="2.4.2.21"/>
    </reaction>
</comment>
<comment type="pathway">
    <text evidence="1">Nucleoside biosynthesis; alpha-ribazole biosynthesis; alpha-ribazole from 5,6-dimethylbenzimidazole: step 1/2.</text>
</comment>
<comment type="similarity">
    <text evidence="1">Belongs to the CobT family.</text>
</comment>
<sequence>MTTPTTLVEFQTALAAATGPDDAARAGAAERNGQLTKPPGALGLLEDLAIWYAGWRGDARPRITAPQVLVFAGNHGVAARGVSAFPPEVTVQMVANFAHGGAAINQLSDLAGATMSVHPIDLETPTADFTQGPAMSEAGVMAAIAVGWEAVDTDADLLVVGEMGIGNTTSAAAVANALYGGAPEDWTGRGTGVDEAGIALKSRIVAEGLAVNPEAATDPLQALRCLGGRELAAMAGAIAHARILHIPVILDGFICTAAAAVLECAVSGALDHAIAGHGSAEQAHARMLHHLGKTPLLQLGLRLGEGSGGALAIQILRGAIACHSGMATFAEAGVAGG</sequence>
<evidence type="ECO:0000255" key="1">
    <source>
        <dbReference type="HAMAP-Rule" id="MF_00230"/>
    </source>
</evidence>
<reference key="1">
    <citation type="submission" date="2006-02" db="EMBL/GenBank/DDBJ databases">
        <title>Complete sequence of chromosome of Jannaschia sp. CCS1.</title>
        <authorList>
            <consortium name="US DOE Joint Genome Institute"/>
            <person name="Copeland A."/>
            <person name="Lucas S."/>
            <person name="Lapidus A."/>
            <person name="Barry K."/>
            <person name="Detter J.C."/>
            <person name="Glavina del Rio T."/>
            <person name="Hammon N."/>
            <person name="Israni S."/>
            <person name="Pitluck S."/>
            <person name="Brettin T."/>
            <person name="Bruce D."/>
            <person name="Han C."/>
            <person name="Tapia R."/>
            <person name="Gilna P."/>
            <person name="Chertkov O."/>
            <person name="Saunders E."/>
            <person name="Schmutz J."/>
            <person name="Larimer F."/>
            <person name="Land M."/>
            <person name="Kyrpides N."/>
            <person name="Lykidis A."/>
            <person name="Moran M.A."/>
            <person name="Belas R."/>
            <person name="Ye W."/>
            <person name="Buchan A."/>
            <person name="Gonzalez J.M."/>
            <person name="Schell M.A."/>
            <person name="Richardson P."/>
        </authorList>
    </citation>
    <scope>NUCLEOTIDE SEQUENCE [LARGE SCALE GENOMIC DNA]</scope>
    <source>
        <strain>CCS1</strain>
    </source>
</reference>
<gene>
    <name evidence="1" type="primary">cobT</name>
    <name type="ordered locus">Jann_3305</name>
</gene>
<dbReference type="EC" id="2.4.2.21" evidence="1"/>
<dbReference type="EMBL" id="CP000264">
    <property type="protein sequence ID" value="ABD56222.1"/>
    <property type="molecule type" value="Genomic_DNA"/>
</dbReference>
<dbReference type="RefSeq" id="WP_011456424.1">
    <property type="nucleotide sequence ID" value="NC_007802.1"/>
</dbReference>
<dbReference type="SMR" id="Q28M40"/>
<dbReference type="STRING" id="290400.Jann_3305"/>
<dbReference type="KEGG" id="jan:Jann_3305"/>
<dbReference type="eggNOG" id="COG2038">
    <property type="taxonomic scope" value="Bacteria"/>
</dbReference>
<dbReference type="HOGENOM" id="CLU_002982_0_1_5"/>
<dbReference type="OrthoDB" id="9781491at2"/>
<dbReference type="UniPathway" id="UPA00061">
    <property type="reaction ID" value="UER00516"/>
</dbReference>
<dbReference type="Proteomes" id="UP000008326">
    <property type="component" value="Chromosome"/>
</dbReference>
<dbReference type="GO" id="GO:0008939">
    <property type="term" value="F:nicotinate-nucleotide-dimethylbenzimidazole phosphoribosyltransferase activity"/>
    <property type="evidence" value="ECO:0007669"/>
    <property type="project" value="UniProtKB-UniRule"/>
</dbReference>
<dbReference type="GO" id="GO:0009236">
    <property type="term" value="P:cobalamin biosynthetic process"/>
    <property type="evidence" value="ECO:0007669"/>
    <property type="project" value="UniProtKB-KW"/>
</dbReference>
<dbReference type="CDD" id="cd02439">
    <property type="entry name" value="DMB-PRT_CobT"/>
    <property type="match status" value="1"/>
</dbReference>
<dbReference type="Gene3D" id="1.10.1610.10">
    <property type="match status" value="1"/>
</dbReference>
<dbReference type="Gene3D" id="3.40.50.10210">
    <property type="match status" value="1"/>
</dbReference>
<dbReference type="HAMAP" id="MF_00230">
    <property type="entry name" value="CobT"/>
    <property type="match status" value="1"/>
</dbReference>
<dbReference type="InterPro" id="IPR003200">
    <property type="entry name" value="Nict_dMeBzImd_PRibTrfase"/>
</dbReference>
<dbReference type="InterPro" id="IPR017846">
    <property type="entry name" value="Nict_dMeBzImd_PRibTrfase_bact"/>
</dbReference>
<dbReference type="InterPro" id="IPR023195">
    <property type="entry name" value="Nict_dMeBzImd_PRibTrfase_N"/>
</dbReference>
<dbReference type="InterPro" id="IPR036087">
    <property type="entry name" value="Nict_dMeBzImd_PRibTrfase_sf"/>
</dbReference>
<dbReference type="NCBIfam" id="TIGR03160">
    <property type="entry name" value="cobT_DBIPRT"/>
    <property type="match status" value="1"/>
</dbReference>
<dbReference type="NCBIfam" id="NF000996">
    <property type="entry name" value="PRK00105.1"/>
    <property type="match status" value="1"/>
</dbReference>
<dbReference type="PANTHER" id="PTHR43463">
    <property type="entry name" value="NICOTINATE-NUCLEOTIDE--DIMETHYLBENZIMIDAZOLE PHOSPHORIBOSYLTRANSFERASE"/>
    <property type="match status" value="1"/>
</dbReference>
<dbReference type="PANTHER" id="PTHR43463:SF1">
    <property type="entry name" value="NICOTINATE-NUCLEOTIDE--DIMETHYLBENZIMIDAZOLE PHOSPHORIBOSYLTRANSFERASE"/>
    <property type="match status" value="1"/>
</dbReference>
<dbReference type="Pfam" id="PF02277">
    <property type="entry name" value="DBI_PRT"/>
    <property type="match status" value="1"/>
</dbReference>
<dbReference type="SUPFAM" id="SSF52733">
    <property type="entry name" value="Nicotinate mononucleotide:5,6-dimethylbenzimidazole phosphoribosyltransferase (CobT)"/>
    <property type="match status" value="1"/>
</dbReference>
<feature type="chain" id="PRO_1000021599" description="Nicotinate-nucleotide--dimethylbenzimidazole phosphoribosyltransferase">
    <location>
        <begin position="1"/>
        <end position="337"/>
    </location>
</feature>
<feature type="active site" description="Proton acceptor" evidence="1">
    <location>
        <position position="305"/>
    </location>
</feature>
<name>COBT_JANSC</name>
<accession>Q28M40</accession>
<keyword id="KW-0169">Cobalamin biosynthesis</keyword>
<keyword id="KW-0328">Glycosyltransferase</keyword>
<keyword id="KW-1185">Reference proteome</keyword>
<keyword id="KW-0808">Transferase</keyword>